<comment type="function">
    <text evidence="1">Part of the Tol-Pal system, which plays a role in outer membrane invagination during cell division and is important for maintaining outer membrane integrity.</text>
</comment>
<comment type="subunit">
    <text evidence="1">The Tol-Pal system is composed of five core proteins: the inner membrane proteins TolA, TolQ and TolR, the periplasmic protein TolB and the outer membrane protein Pal. They form a network linking the inner and outer membranes and the peptidoglycan layer.</text>
</comment>
<comment type="subcellular location">
    <subcellularLocation>
        <location evidence="1">Periplasm</location>
    </subcellularLocation>
</comment>
<comment type="similarity">
    <text evidence="1">Belongs to the TolB family.</text>
</comment>
<gene>
    <name evidence="1" type="primary">tolB</name>
    <name type="ordered locus">RHECIAT_CH0003701</name>
</gene>
<keyword id="KW-0131">Cell cycle</keyword>
<keyword id="KW-0132">Cell division</keyword>
<keyword id="KW-0574">Periplasm</keyword>
<keyword id="KW-0732">Signal</keyword>
<protein>
    <recommendedName>
        <fullName evidence="1">Tol-Pal system protein TolB</fullName>
    </recommendedName>
</protein>
<organism>
    <name type="scientific">Rhizobium etli (strain CIAT 652)</name>
    <dbReference type="NCBI Taxonomy" id="491916"/>
    <lineage>
        <taxon>Bacteria</taxon>
        <taxon>Pseudomonadati</taxon>
        <taxon>Pseudomonadota</taxon>
        <taxon>Alphaproteobacteria</taxon>
        <taxon>Hyphomicrobiales</taxon>
        <taxon>Rhizobiaceae</taxon>
        <taxon>Rhizobium/Agrobacterium group</taxon>
        <taxon>Rhizobium</taxon>
    </lineage>
</organism>
<name>TOLB_RHIE6</name>
<accession>B3PYX5</accession>
<sequence>MMKCSFFRAILVAVGLMAAAVVATPANALVTLDIRKGNVQPMPIAITDFLQGDMGAQVSQVIAADLQRSGLFAPINKSAFIEKISNPDASPRFEDWKVINAQALVTGRVTQEADGRLRAEFRLWDPFAGQQMTGQQFYTQPENWRRVAHIIADAIYKQITGEEGYFDTRVVFVSESGTKQQRKRQLAIMDQDGFNVRMLTDGSDLVLTPRFSPNRQEVTYMSFANQQPRVYLLQLETGQREVVGNFPGMTFSPRFSPDGQKVIMSLQQEGNSNIYTMDLRSRTTTRLTSTAAIDTSPSYSPDGARVSFESDRGGKPQIYVMNADGSGQTRISFGDGSYSTPVWSPRGDLIAFTKQAGGKFSIGVMKPDGSGERILTTGFHNEGPTWAPNGRVLMFFRQAAGAGGPQLYSIDLTGYNEQLVKTPSYGSDPAWSPLLE</sequence>
<evidence type="ECO:0000255" key="1">
    <source>
        <dbReference type="HAMAP-Rule" id="MF_00671"/>
    </source>
</evidence>
<dbReference type="EMBL" id="CP001074">
    <property type="protein sequence ID" value="ACE92639.1"/>
    <property type="molecule type" value="Genomic_DNA"/>
</dbReference>
<dbReference type="SMR" id="B3PYX5"/>
<dbReference type="KEGG" id="rec:RHECIAT_CH0003701"/>
<dbReference type="eggNOG" id="COG0823">
    <property type="taxonomic scope" value="Bacteria"/>
</dbReference>
<dbReference type="HOGENOM" id="CLU_047123_0_0_5"/>
<dbReference type="Proteomes" id="UP000008817">
    <property type="component" value="Chromosome"/>
</dbReference>
<dbReference type="GO" id="GO:0042597">
    <property type="term" value="C:periplasmic space"/>
    <property type="evidence" value="ECO:0007669"/>
    <property type="project" value="UniProtKB-SubCell"/>
</dbReference>
<dbReference type="GO" id="GO:0051301">
    <property type="term" value="P:cell division"/>
    <property type="evidence" value="ECO:0007669"/>
    <property type="project" value="UniProtKB-UniRule"/>
</dbReference>
<dbReference type="GO" id="GO:0017038">
    <property type="term" value="P:protein import"/>
    <property type="evidence" value="ECO:0007669"/>
    <property type="project" value="InterPro"/>
</dbReference>
<dbReference type="Gene3D" id="2.120.10.30">
    <property type="entry name" value="TolB, C-terminal domain"/>
    <property type="match status" value="1"/>
</dbReference>
<dbReference type="Gene3D" id="3.40.50.10070">
    <property type="entry name" value="TolB, N-terminal domain"/>
    <property type="match status" value="1"/>
</dbReference>
<dbReference type="HAMAP" id="MF_00671">
    <property type="entry name" value="TolB"/>
    <property type="match status" value="1"/>
</dbReference>
<dbReference type="InterPro" id="IPR011042">
    <property type="entry name" value="6-blade_b-propeller_TolB-like"/>
</dbReference>
<dbReference type="InterPro" id="IPR011659">
    <property type="entry name" value="PD40"/>
</dbReference>
<dbReference type="InterPro" id="IPR014167">
    <property type="entry name" value="Tol-Pal_TolB"/>
</dbReference>
<dbReference type="InterPro" id="IPR007195">
    <property type="entry name" value="TolB_N"/>
</dbReference>
<dbReference type="NCBIfam" id="TIGR02800">
    <property type="entry name" value="propeller_TolB"/>
    <property type="match status" value="1"/>
</dbReference>
<dbReference type="PANTHER" id="PTHR36842:SF1">
    <property type="entry name" value="PROTEIN TOLB"/>
    <property type="match status" value="1"/>
</dbReference>
<dbReference type="PANTHER" id="PTHR36842">
    <property type="entry name" value="PROTEIN TOLB HOMOLOG"/>
    <property type="match status" value="1"/>
</dbReference>
<dbReference type="Pfam" id="PF07676">
    <property type="entry name" value="PD40"/>
    <property type="match status" value="3"/>
</dbReference>
<dbReference type="Pfam" id="PF04052">
    <property type="entry name" value="TolB_N"/>
    <property type="match status" value="1"/>
</dbReference>
<dbReference type="SUPFAM" id="SSF52964">
    <property type="entry name" value="TolB, N-terminal domain"/>
    <property type="match status" value="1"/>
</dbReference>
<dbReference type="SUPFAM" id="SSF69304">
    <property type="entry name" value="Tricorn protease N-terminal domain"/>
    <property type="match status" value="1"/>
</dbReference>
<proteinExistence type="inferred from homology"/>
<reference key="1">
    <citation type="journal article" date="2010" name="Appl. Environ. Microbiol.">
        <title>Conserved symbiotic plasmid DNA sequences in the multireplicon pangenomic structure of Rhizobium etli.</title>
        <authorList>
            <person name="Gonzalez V."/>
            <person name="Acosta J.L."/>
            <person name="Santamaria R.I."/>
            <person name="Bustos P."/>
            <person name="Fernandez J.L."/>
            <person name="Hernandez Gonzalez I.L."/>
            <person name="Diaz R."/>
            <person name="Flores M."/>
            <person name="Palacios R."/>
            <person name="Mora J."/>
            <person name="Davila G."/>
        </authorList>
    </citation>
    <scope>NUCLEOTIDE SEQUENCE [LARGE SCALE GENOMIC DNA]</scope>
    <source>
        <strain>CIAT 652</strain>
    </source>
</reference>
<feature type="signal peptide" evidence="1">
    <location>
        <begin position="1"/>
        <end position="28"/>
    </location>
</feature>
<feature type="chain" id="PRO_1000131534" description="Tol-Pal system protein TolB" evidence="1">
    <location>
        <begin position="29"/>
        <end position="436"/>
    </location>
</feature>